<keyword id="KW-0028">Amino-acid biosynthesis</keyword>
<keyword id="KW-0963">Cytoplasm</keyword>
<keyword id="KW-0368">Histidine biosynthesis</keyword>
<keyword id="KW-0413">Isomerase</keyword>
<keyword id="KW-1185">Reference proteome</keyword>
<reference key="1">
    <citation type="journal article" date="2004" name="Science">
        <title>The genomic sequence of the accidental pathogen Legionella pneumophila.</title>
        <authorList>
            <person name="Chien M."/>
            <person name="Morozova I."/>
            <person name="Shi S."/>
            <person name="Sheng H."/>
            <person name="Chen J."/>
            <person name="Gomez S.M."/>
            <person name="Asamani G."/>
            <person name="Hill K."/>
            <person name="Nuara J."/>
            <person name="Feder M."/>
            <person name="Rineer J."/>
            <person name="Greenberg J.J."/>
            <person name="Steshenko V."/>
            <person name="Park S.H."/>
            <person name="Zhao B."/>
            <person name="Teplitskaya E."/>
            <person name="Edwards J.R."/>
            <person name="Pampou S."/>
            <person name="Georghiou A."/>
            <person name="Chou I.-C."/>
            <person name="Iannuccilli W."/>
            <person name="Ulz M.E."/>
            <person name="Kim D.H."/>
            <person name="Geringer-Sameth A."/>
            <person name="Goldsberry C."/>
            <person name="Morozov P."/>
            <person name="Fischer S.G."/>
            <person name="Segal G."/>
            <person name="Qu X."/>
            <person name="Rzhetsky A."/>
            <person name="Zhang P."/>
            <person name="Cayanis E."/>
            <person name="De Jong P.J."/>
            <person name="Ju J."/>
            <person name="Kalachikov S."/>
            <person name="Shuman H.A."/>
            <person name="Russo J.J."/>
        </authorList>
    </citation>
    <scope>NUCLEOTIDE SEQUENCE [LARGE SCALE GENOMIC DNA]</scope>
    <source>
        <strain>Philadelphia 1 / ATCC 33152 / DSM 7513</strain>
    </source>
</reference>
<organism>
    <name type="scientific">Legionella pneumophila subsp. pneumophila (strain Philadelphia 1 / ATCC 33152 / DSM 7513)</name>
    <dbReference type="NCBI Taxonomy" id="272624"/>
    <lineage>
        <taxon>Bacteria</taxon>
        <taxon>Pseudomonadati</taxon>
        <taxon>Pseudomonadota</taxon>
        <taxon>Gammaproteobacteria</taxon>
        <taxon>Legionellales</taxon>
        <taxon>Legionellaceae</taxon>
        <taxon>Legionella</taxon>
    </lineage>
</organism>
<protein>
    <recommendedName>
        <fullName evidence="1">1-(5-phosphoribosyl)-5-[(5-phosphoribosylamino)methylideneamino] imidazole-4-carboxamide isomerase</fullName>
        <ecNumber evidence="1">5.3.1.16</ecNumber>
    </recommendedName>
    <alternativeName>
        <fullName evidence="1">Phosphoribosylformimino-5-aminoimidazole carboxamide ribotide isomerase</fullName>
    </alternativeName>
</protein>
<gene>
    <name evidence="1" type="primary">hisA</name>
    <name type="ordered locus">lpg1195</name>
</gene>
<feature type="chain" id="PRO_0000142015" description="1-(5-phosphoribosyl)-5-[(5-phosphoribosylamino)methylideneamino] imidazole-4-carboxamide isomerase">
    <location>
        <begin position="1"/>
        <end position="239"/>
    </location>
</feature>
<feature type="active site" description="Proton acceptor" evidence="1">
    <location>
        <position position="8"/>
    </location>
</feature>
<feature type="active site" description="Proton donor" evidence="1">
    <location>
        <position position="129"/>
    </location>
</feature>
<evidence type="ECO:0000255" key="1">
    <source>
        <dbReference type="HAMAP-Rule" id="MF_01014"/>
    </source>
</evidence>
<dbReference type="EC" id="5.3.1.16" evidence="1"/>
<dbReference type="EMBL" id="AE017354">
    <property type="protein sequence ID" value="AAU27280.1"/>
    <property type="molecule type" value="Genomic_DNA"/>
</dbReference>
<dbReference type="RefSeq" id="WP_010946928.1">
    <property type="nucleotide sequence ID" value="NC_002942.5"/>
</dbReference>
<dbReference type="RefSeq" id="YP_095227.1">
    <property type="nucleotide sequence ID" value="NC_002942.5"/>
</dbReference>
<dbReference type="SMR" id="Q5ZW91"/>
<dbReference type="STRING" id="272624.lpg1195"/>
<dbReference type="PaxDb" id="272624-lpg1195"/>
<dbReference type="DNASU" id="3077897"/>
<dbReference type="GeneID" id="57035185"/>
<dbReference type="KEGG" id="lpn:lpg1195"/>
<dbReference type="PATRIC" id="fig|272624.6.peg.1257"/>
<dbReference type="eggNOG" id="COG0106">
    <property type="taxonomic scope" value="Bacteria"/>
</dbReference>
<dbReference type="HOGENOM" id="CLU_048577_1_2_6"/>
<dbReference type="OrthoDB" id="9807749at2"/>
<dbReference type="UniPathway" id="UPA00031">
    <property type="reaction ID" value="UER00009"/>
</dbReference>
<dbReference type="Proteomes" id="UP000000609">
    <property type="component" value="Chromosome"/>
</dbReference>
<dbReference type="GO" id="GO:0005737">
    <property type="term" value="C:cytoplasm"/>
    <property type="evidence" value="ECO:0007669"/>
    <property type="project" value="UniProtKB-SubCell"/>
</dbReference>
<dbReference type="GO" id="GO:0003949">
    <property type="term" value="F:1-(5-phosphoribosyl)-5-[(5-phosphoribosylamino)methylideneamino]imidazole-4-carboxamide isomerase activity"/>
    <property type="evidence" value="ECO:0007669"/>
    <property type="project" value="UniProtKB-UniRule"/>
</dbReference>
<dbReference type="GO" id="GO:0000105">
    <property type="term" value="P:L-histidine biosynthetic process"/>
    <property type="evidence" value="ECO:0007669"/>
    <property type="project" value="UniProtKB-UniRule"/>
</dbReference>
<dbReference type="GO" id="GO:0000162">
    <property type="term" value="P:L-tryptophan biosynthetic process"/>
    <property type="evidence" value="ECO:0007669"/>
    <property type="project" value="TreeGrafter"/>
</dbReference>
<dbReference type="CDD" id="cd04732">
    <property type="entry name" value="HisA"/>
    <property type="match status" value="1"/>
</dbReference>
<dbReference type="FunFam" id="3.20.20.70:FF:000009">
    <property type="entry name" value="1-(5-phosphoribosyl)-5-[(5-phosphoribosylamino)methylideneamino] imidazole-4-carboxamide isomerase"/>
    <property type="match status" value="1"/>
</dbReference>
<dbReference type="Gene3D" id="3.20.20.70">
    <property type="entry name" value="Aldolase class I"/>
    <property type="match status" value="1"/>
</dbReference>
<dbReference type="HAMAP" id="MF_01014">
    <property type="entry name" value="HisA"/>
    <property type="match status" value="1"/>
</dbReference>
<dbReference type="InterPro" id="IPR013785">
    <property type="entry name" value="Aldolase_TIM"/>
</dbReference>
<dbReference type="InterPro" id="IPR006062">
    <property type="entry name" value="His_biosynth"/>
</dbReference>
<dbReference type="InterPro" id="IPR006063">
    <property type="entry name" value="HisA_bact_arch"/>
</dbReference>
<dbReference type="InterPro" id="IPR044524">
    <property type="entry name" value="Isoase_HisA-like"/>
</dbReference>
<dbReference type="InterPro" id="IPR023016">
    <property type="entry name" value="Isoase_HisA-like_bact"/>
</dbReference>
<dbReference type="InterPro" id="IPR011060">
    <property type="entry name" value="RibuloseP-bd_barrel"/>
</dbReference>
<dbReference type="NCBIfam" id="TIGR00007">
    <property type="entry name" value="1-(5-phosphoribosyl)-5-[(5-phosphoribosylamino)methylideneamino]imidazole-4-carboxamide isomerase"/>
    <property type="match status" value="1"/>
</dbReference>
<dbReference type="PANTHER" id="PTHR43090">
    <property type="entry name" value="1-(5-PHOSPHORIBOSYL)-5-[(5-PHOSPHORIBOSYLAMINO)METHYLIDENEAMINO] IMIDAZOLE-4-CARBOXAMIDE ISOMERASE"/>
    <property type="match status" value="1"/>
</dbReference>
<dbReference type="PANTHER" id="PTHR43090:SF2">
    <property type="entry name" value="1-(5-PHOSPHORIBOSYL)-5-[(5-PHOSPHORIBOSYLAMINO)METHYLIDENEAMINO] IMIDAZOLE-4-CARBOXAMIDE ISOMERASE"/>
    <property type="match status" value="1"/>
</dbReference>
<dbReference type="Pfam" id="PF00977">
    <property type="entry name" value="His_biosynth"/>
    <property type="match status" value="1"/>
</dbReference>
<dbReference type="SUPFAM" id="SSF51366">
    <property type="entry name" value="Ribulose-phoshate binding barrel"/>
    <property type="match status" value="1"/>
</dbReference>
<name>HIS4_LEGPH</name>
<accession>Q5ZW91</accession>
<sequence>MLVIPAIDLQSGRCVRLKQGRFDQVTQFSVFPIERALHFAKLGAKRLHVVDLDGARSGKMQQLELICSMQKTGIPIQAGGGIRSIEQALECSNAGISQLVIGSLAITNPDLTIQIIEKIKPENIVLALDVRVDTKVPLLAINGWQNNSTSSLWEVVSYYENYGIKNILCTDIACDGMMNGPNFDLYQQAVEYFPQIAWQASGGVRHMQDITTLNSLGISAVILGLMLYQDHMNLEELLC</sequence>
<proteinExistence type="inferred from homology"/>
<comment type="catalytic activity">
    <reaction evidence="1">
        <text>1-(5-phospho-beta-D-ribosyl)-5-[(5-phospho-beta-D-ribosylamino)methylideneamino]imidazole-4-carboxamide = 5-[(5-phospho-1-deoxy-D-ribulos-1-ylimino)methylamino]-1-(5-phospho-beta-D-ribosyl)imidazole-4-carboxamide</text>
        <dbReference type="Rhea" id="RHEA:15469"/>
        <dbReference type="ChEBI" id="CHEBI:58435"/>
        <dbReference type="ChEBI" id="CHEBI:58525"/>
        <dbReference type="EC" id="5.3.1.16"/>
    </reaction>
</comment>
<comment type="pathway">
    <text evidence="1">Amino-acid biosynthesis; L-histidine biosynthesis; L-histidine from 5-phospho-alpha-D-ribose 1-diphosphate: step 4/9.</text>
</comment>
<comment type="subcellular location">
    <subcellularLocation>
        <location evidence="1">Cytoplasm</location>
    </subcellularLocation>
</comment>
<comment type="similarity">
    <text evidence="1">Belongs to the HisA/HisF family.</text>
</comment>